<reference evidence="7" key="1">
    <citation type="journal article" date="2009" name="Mol. Cell. Proteomics">
        <title>Anti-thrombosis repertoire of blood-feeding horsefly salivary glands.</title>
        <authorList>
            <person name="Ma D."/>
            <person name="Wang Y."/>
            <person name="Yang H."/>
            <person name="Wu J."/>
            <person name="An S."/>
            <person name="Gao L."/>
            <person name="Xu X."/>
            <person name="Lai R."/>
        </authorList>
    </citation>
    <scope>NUCLEOTIDE SEQUENCE [MRNA]</scope>
    <scope>PROTEIN SEQUENCE OF 22-50</scope>
    <scope>SUBCELLULAR LOCATION</scope>
    <scope>TISSUE SPECIFICITY</scope>
    <scope>MASS SPECTROMETRY</scope>
    <source>
        <tissue>Salivary gland</tissue>
    </source>
</reference>
<name>VASO3_TABYA</name>
<sequence length="76" mass="8262">MKFALFSVLVLMLIATFVAADDCPRICTSDYTPVCGTPSGGRRSANRTFANQCGLDSHNCLNKGDTYDKLHDGECK</sequence>
<accession>C8YJB4</accession>
<evidence type="ECO:0000250" key="1">
    <source>
        <dbReference type="UniProtKB" id="P84843"/>
    </source>
</evidence>
<evidence type="ECO:0000255" key="2">
    <source>
        <dbReference type="PROSITE-ProRule" id="PRU00798"/>
    </source>
</evidence>
<evidence type="ECO:0000269" key="3">
    <source>
    </source>
</evidence>
<evidence type="ECO:0000303" key="4">
    <source>
    </source>
</evidence>
<evidence type="ECO:0000305" key="5"/>
<evidence type="ECO:0000305" key="6">
    <source>
    </source>
</evidence>
<evidence type="ECO:0000312" key="7">
    <source>
        <dbReference type="EMBL" id="ACS72309.1"/>
    </source>
</evidence>
<protein>
    <recommendedName>
        <fullName evidence="4">Vasotab-TY3</fullName>
    </recommendedName>
</protein>
<keyword id="KW-0108">Calcium channel impairing toxin</keyword>
<keyword id="KW-0903">Direct protein sequencing</keyword>
<keyword id="KW-1015">Disulfide bond</keyword>
<keyword id="KW-0872">Ion channel impairing toxin</keyword>
<keyword id="KW-0964">Secreted</keyword>
<keyword id="KW-0732">Signal</keyword>
<keyword id="KW-0800">Toxin</keyword>
<keyword id="KW-0838">Vasoactive</keyword>
<keyword id="KW-0840">Vasodilator</keyword>
<keyword id="KW-1218">Voltage-gated calcium channel impairing toxin</keyword>
<organism>
    <name type="scientific">Tabanus yao</name>
    <name type="common">Horsefly</name>
    <dbReference type="NCBI Taxonomy" id="485572"/>
    <lineage>
        <taxon>Eukaryota</taxon>
        <taxon>Metazoa</taxon>
        <taxon>Ecdysozoa</taxon>
        <taxon>Arthropoda</taxon>
        <taxon>Hexapoda</taxon>
        <taxon>Insecta</taxon>
        <taxon>Pterygota</taxon>
        <taxon>Neoptera</taxon>
        <taxon>Endopterygota</taxon>
        <taxon>Diptera</taxon>
        <taxon>Brachycera</taxon>
        <taxon>Tabanomorpha</taxon>
        <taxon>Tabanoidea</taxon>
        <taxon>Tabanidae</taxon>
        <taxon>Tabanus</taxon>
    </lineage>
</organism>
<proteinExistence type="evidence at protein level"/>
<feature type="signal peptide" evidence="6">
    <location>
        <begin position="1"/>
        <end position="21"/>
    </location>
</feature>
<feature type="chain" id="PRO_5002993623" description="Vasotab-TY3" evidence="5">
    <location>
        <begin position="22"/>
        <end position="76"/>
    </location>
</feature>
<feature type="domain" description="Kazal-like" evidence="2">
    <location>
        <begin position="22"/>
        <end position="76"/>
    </location>
</feature>
<feature type="disulfide bond" evidence="1 2">
    <location>
        <begin position="23"/>
        <end position="60"/>
    </location>
</feature>
<feature type="disulfide bond" evidence="1 2">
    <location>
        <begin position="27"/>
        <end position="53"/>
    </location>
</feature>
<feature type="disulfide bond" evidence="1 2">
    <location>
        <begin position="35"/>
        <end position="75"/>
    </location>
</feature>
<comment type="function">
    <text evidence="1">Vasodilator protein that inhibits vasoconstriction of isolated rat femoral artery induced by phenylephrine. Since platelet aggregation and vasoconstriction are key hemostatic responses, particularly in small wounds, this protein likely participates in the antihemostatic responses during blood feeding. Blocks L-type calcium channels (Cav1/CACNA1) in left ventricular myocytes isolated from rat hearts.</text>
</comment>
<comment type="subcellular location">
    <subcellularLocation>
        <location evidence="3">Secreted</location>
    </subcellularLocation>
</comment>
<comment type="tissue specificity">
    <text evidence="3">Expressed by the salivary gland.</text>
</comment>
<comment type="mass spectrometry" mass="5975.1" method="MALDI" evidence="3"/>
<dbReference type="EMBL" id="FJ469621">
    <property type="protein sequence ID" value="ACS72309.1"/>
    <property type="molecule type" value="mRNA"/>
</dbReference>
<dbReference type="SMR" id="C8YJB4"/>
<dbReference type="GO" id="GO:0005576">
    <property type="term" value="C:extracellular region"/>
    <property type="evidence" value="ECO:0007669"/>
    <property type="project" value="UniProtKB-SubCell"/>
</dbReference>
<dbReference type="GO" id="GO:0005246">
    <property type="term" value="F:calcium channel regulator activity"/>
    <property type="evidence" value="ECO:0007669"/>
    <property type="project" value="UniProtKB-KW"/>
</dbReference>
<dbReference type="GO" id="GO:0090729">
    <property type="term" value="F:toxin activity"/>
    <property type="evidence" value="ECO:0007669"/>
    <property type="project" value="UniProtKB-KW"/>
</dbReference>
<dbReference type="GO" id="GO:0042311">
    <property type="term" value="P:vasodilation"/>
    <property type="evidence" value="ECO:0007669"/>
    <property type="project" value="UniProtKB-KW"/>
</dbReference>
<dbReference type="Gene3D" id="3.30.60.30">
    <property type="match status" value="1"/>
</dbReference>
<dbReference type="InterPro" id="IPR002350">
    <property type="entry name" value="Kazal_dom"/>
</dbReference>
<dbReference type="InterPro" id="IPR036058">
    <property type="entry name" value="Kazal_dom_sf"/>
</dbReference>
<dbReference type="Pfam" id="PF00050">
    <property type="entry name" value="Kazal_1"/>
    <property type="match status" value="1"/>
</dbReference>
<dbReference type="SMART" id="SM00280">
    <property type="entry name" value="KAZAL"/>
    <property type="match status" value="1"/>
</dbReference>
<dbReference type="SUPFAM" id="SSF100895">
    <property type="entry name" value="Kazal-type serine protease inhibitors"/>
    <property type="match status" value="1"/>
</dbReference>
<dbReference type="PROSITE" id="PS51465">
    <property type="entry name" value="KAZAL_2"/>
    <property type="match status" value="1"/>
</dbReference>